<feature type="chain" id="PRO_0000159497" description="Cysteine--tRNA ligase">
    <location>
        <begin position="1"/>
        <end position="447"/>
    </location>
</feature>
<feature type="short sequence motif" description="'HIGH' region">
    <location>
        <begin position="30"/>
        <end position="40"/>
    </location>
</feature>
<feature type="short sequence motif" description="'KMSKS' region">
    <location>
        <begin position="268"/>
        <end position="272"/>
    </location>
</feature>
<feature type="binding site" evidence="1">
    <location>
        <position position="28"/>
    </location>
    <ligand>
        <name>Zn(2+)</name>
        <dbReference type="ChEBI" id="CHEBI:29105"/>
    </ligand>
</feature>
<feature type="binding site" evidence="1">
    <location>
        <position position="211"/>
    </location>
    <ligand>
        <name>Zn(2+)</name>
        <dbReference type="ChEBI" id="CHEBI:29105"/>
    </ligand>
</feature>
<feature type="binding site" evidence="1">
    <location>
        <position position="236"/>
    </location>
    <ligand>
        <name>Zn(2+)</name>
        <dbReference type="ChEBI" id="CHEBI:29105"/>
    </ligand>
</feature>
<feature type="binding site" evidence="1">
    <location>
        <position position="240"/>
    </location>
    <ligand>
        <name>Zn(2+)</name>
        <dbReference type="ChEBI" id="CHEBI:29105"/>
    </ligand>
</feature>
<feature type="binding site" evidence="1">
    <location>
        <position position="271"/>
    </location>
    <ligand>
        <name>ATP</name>
        <dbReference type="ChEBI" id="CHEBI:30616"/>
    </ligand>
</feature>
<reference key="1">
    <citation type="journal article" date="2004" name="J. Infect. Dis.">
        <title>Progress toward characterization of the group A Streptococcus metagenome: complete genome sequence of a macrolide-resistant serotype M6 strain.</title>
        <authorList>
            <person name="Banks D.J."/>
            <person name="Porcella S.F."/>
            <person name="Barbian K.D."/>
            <person name="Beres S.B."/>
            <person name="Philips L.E."/>
            <person name="Voyich J.M."/>
            <person name="DeLeo F.R."/>
            <person name="Martin J.M."/>
            <person name="Somerville G.A."/>
            <person name="Musser J.M."/>
        </authorList>
    </citation>
    <scope>NUCLEOTIDE SEQUENCE [LARGE SCALE GENOMIC DNA]</scope>
    <source>
        <strain>ATCC BAA-946 / MGAS10394</strain>
    </source>
</reference>
<protein>
    <recommendedName>
        <fullName evidence="1">Cysteine--tRNA ligase</fullName>
        <ecNumber evidence="1">6.1.1.16</ecNumber>
    </recommendedName>
    <alternativeName>
        <fullName evidence="1">Cysteinyl-tRNA synthetase</fullName>
        <shortName evidence="1">CysRS</shortName>
    </alternativeName>
</protein>
<sequence length="447" mass="50437">MIKIYDTMTRSLRKFVPLTENTVNMYVCGPTVYNYIHIGNARSAVAFDTIRRYFEYTGYQVNYISNFTDVDDKIIKAATQAGVSPKELSDRFIAAFIEDTKALGVKPATQNPRVMDYIAEIISFVESLIEKDFAYEADGDVYFRVEKSEHYAKLANKTLSELEVGASGRTDAETALKENPLDFALWKSAKAGEVSWDSPWGFGRPGWHIECSVMATEILGDTIDIHGGGADLEFPHHTNEIAQSEAKTGKTFANYWMHNGFVTVDNEKMSKSLGNFVTVHDMLQTVDGQVLRFFLATQQYRKPINFTEKAIHDAEINLKYLKNTLQQPLTETADEQELKQFVIAFQDAMDDDFNTANGITVVFDMAKWINSGSYTEPVKSAFEKMLAVFGIVFEEEVLEVDIEALIAKRQEARANRDFATADAIRDQLAAQGIKLLDTKDGVRWLRD</sequence>
<comment type="catalytic activity">
    <reaction evidence="1">
        <text>tRNA(Cys) + L-cysteine + ATP = L-cysteinyl-tRNA(Cys) + AMP + diphosphate</text>
        <dbReference type="Rhea" id="RHEA:17773"/>
        <dbReference type="Rhea" id="RHEA-COMP:9661"/>
        <dbReference type="Rhea" id="RHEA-COMP:9679"/>
        <dbReference type="ChEBI" id="CHEBI:30616"/>
        <dbReference type="ChEBI" id="CHEBI:33019"/>
        <dbReference type="ChEBI" id="CHEBI:35235"/>
        <dbReference type="ChEBI" id="CHEBI:78442"/>
        <dbReference type="ChEBI" id="CHEBI:78517"/>
        <dbReference type="ChEBI" id="CHEBI:456215"/>
        <dbReference type="EC" id="6.1.1.16"/>
    </reaction>
</comment>
<comment type="cofactor">
    <cofactor evidence="1">
        <name>Zn(2+)</name>
        <dbReference type="ChEBI" id="CHEBI:29105"/>
    </cofactor>
    <text evidence="1">Binds 1 zinc ion per subunit.</text>
</comment>
<comment type="subunit">
    <text evidence="1">Monomer.</text>
</comment>
<comment type="subcellular location">
    <subcellularLocation>
        <location evidence="1">Cytoplasm</location>
    </subcellularLocation>
</comment>
<comment type="similarity">
    <text evidence="1">Belongs to the class-I aminoacyl-tRNA synthetase family.</text>
</comment>
<proteinExistence type="inferred from homology"/>
<accession>Q5X9W5</accession>
<organism>
    <name type="scientific">Streptococcus pyogenes serotype M6 (strain ATCC BAA-946 / MGAS10394)</name>
    <dbReference type="NCBI Taxonomy" id="286636"/>
    <lineage>
        <taxon>Bacteria</taxon>
        <taxon>Bacillati</taxon>
        <taxon>Bacillota</taxon>
        <taxon>Bacilli</taxon>
        <taxon>Lactobacillales</taxon>
        <taxon>Streptococcaceae</taxon>
        <taxon>Streptococcus</taxon>
    </lineage>
</organism>
<keyword id="KW-0030">Aminoacyl-tRNA synthetase</keyword>
<keyword id="KW-0067">ATP-binding</keyword>
<keyword id="KW-0963">Cytoplasm</keyword>
<keyword id="KW-0436">Ligase</keyword>
<keyword id="KW-0479">Metal-binding</keyword>
<keyword id="KW-0547">Nucleotide-binding</keyword>
<keyword id="KW-0648">Protein biosynthesis</keyword>
<keyword id="KW-0862">Zinc</keyword>
<gene>
    <name evidence="1" type="primary">cysS</name>
    <name type="ordered locus">M6_Spy1663</name>
</gene>
<dbReference type="EC" id="6.1.1.16" evidence="1"/>
<dbReference type="EMBL" id="CP000003">
    <property type="protein sequence ID" value="AAT87798.1"/>
    <property type="molecule type" value="Genomic_DNA"/>
</dbReference>
<dbReference type="RefSeq" id="WP_011184974.1">
    <property type="nucleotide sequence ID" value="NC_006086.1"/>
</dbReference>
<dbReference type="SMR" id="Q5X9W5"/>
<dbReference type="KEGG" id="spa:M6_Spy1663"/>
<dbReference type="HOGENOM" id="CLU_013528_0_1_9"/>
<dbReference type="Proteomes" id="UP000001167">
    <property type="component" value="Chromosome"/>
</dbReference>
<dbReference type="GO" id="GO:0005829">
    <property type="term" value="C:cytosol"/>
    <property type="evidence" value="ECO:0007669"/>
    <property type="project" value="TreeGrafter"/>
</dbReference>
<dbReference type="GO" id="GO:0005524">
    <property type="term" value="F:ATP binding"/>
    <property type="evidence" value="ECO:0007669"/>
    <property type="project" value="UniProtKB-UniRule"/>
</dbReference>
<dbReference type="GO" id="GO:0004817">
    <property type="term" value="F:cysteine-tRNA ligase activity"/>
    <property type="evidence" value="ECO:0007669"/>
    <property type="project" value="UniProtKB-UniRule"/>
</dbReference>
<dbReference type="GO" id="GO:0008270">
    <property type="term" value="F:zinc ion binding"/>
    <property type="evidence" value="ECO:0007669"/>
    <property type="project" value="UniProtKB-UniRule"/>
</dbReference>
<dbReference type="GO" id="GO:0006423">
    <property type="term" value="P:cysteinyl-tRNA aminoacylation"/>
    <property type="evidence" value="ECO:0007669"/>
    <property type="project" value="UniProtKB-UniRule"/>
</dbReference>
<dbReference type="CDD" id="cd00672">
    <property type="entry name" value="CysRS_core"/>
    <property type="match status" value="1"/>
</dbReference>
<dbReference type="FunFam" id="3.40.50.620:FF:000130">
    <property type="entry name" value="Cysteine--tRNA ligase"/>
    <property type="match status" value="1"/>
</dbReference>
<dbReference type="Gene3D" id="1.20.120.640">
    <property type="entry name" value="Anticodon-binding domain of a subclass of class I aminoacyl-tRNA synthetases"/>
    <property type="match status" value="1"/>
</dbReference>
<dbReference type="Gene3D" id="3.40.50.620">
    <property type="entry name" value="HUPs"/>
    <property type="match status" value="1"/>
</dbReference>
<dbReference type="HAMAP" id="MF_00041">
    <property type="entry name" value="Cys_tRNA_synth"/>
    <property type="match status" value="1"/>
</dbReference>
<dbReference type="InterPro" id="IPR015803">
    <property type="entry name" value="Cys-tRNA-ligase"/>
</dbReference>
<dbReference type="InterPro" id="IPR015273">
    <property type="entry name" value="Cys-tRNA-synt_Ia_DALR"/>
</dbReference>
<dbReference type="InterPro" id="IPR024909">
    <property type="entry name" value="Cys-tRNA/MSH_ligase"/>
</dbReference>
<dbReference type="InterPro" id="IPR056411">
    <property type="entry name" value="CysS_C"/>
</dbReference>
<dbReference type="InterPro" id="IPR014729">
    <property type="entry name" value="Rossmann-like_a/b/a_fold"/>
</dbReference>
<dbReference type="InterPro" id="IPR032678">
    <property type="entry name" value="tRNA-synt_1_cat_dom"/>
</dbReference>
<dbReference type="InterPro" id="IPR009080">
    <property type="entry name" value="tRNAsynth_Ia_anticodon-bd"/>
</dbReference>
<dbReference type="NCBIfam" id="TIGR00435">
    <property type="entry name" value="cysS"/>
    <property type="match status" value="1"/>
</dbReference>
<dbReference type="PANTHER" id="PTHR10890:SF3">
    <property type="entry name" value="CYSTEINE--TRNA LIGASE, CYTOPLASMIC"/>
    <property type="match status" value="1"/>
</dbReference>
<dbReference type="PANTHER" id="PTHR10890">
    <property type="entry name" value="CYSTEINYL-TRNA SYNTHETASE"/>
    <property type="match status" value="1"/>
</dbReference>
<dbReference type="Pfam" id="PF23493">
    <property type="entry name" value="CysS_C"/>
    <property type="match status" value="1"/>
</dbReference>
<dbReference type="Pfam" id="PF09190">
    <property type="entry name" value="DALR_2"/>
    <property type="match status" value="1"/>
</dbReference>
<dbReference type="Pfam" id="PF01406">
    <property type="entry name" value="tRNA-synt_1e"/>
    <property type="match status" value="1"/>
</dbReference>
<dbReference type="PRINTS" id="PR00983">
    <property type="entry name" value="TRNASYNTHCYS"/>
</dbReference>
<dbReference type="SMART" id="SM00840">
    <property type="entry name" value="DALR_2"/>
    <property type="match status" value="1"/>
</dbReference>
<dbReference type="SUPFAM" id="SSF47323">
    <property type="entry name" value="Anticodon-binding domain of a subclass of class I aminoacyl-tRNA synthetases"/>
    <property type="match status" value="1"/>
</dbReference>
<dbReference type="SUPFAM" id="SSF52374">
    <property type="entry name" value="Nucleotidylyl transferase"/>
    <property type="match status" value="1"/>
</dbReference>
<evidence type="ECO:0000255" key="1">
    <source>
        <dbReference type="HAMAP-Rule" id="MF_00041"/>
    </source>
</evidence>
<name>SYC_STRP6</name>